<proteinExistence type="uncertain"/>
<organism>
    <name type="scientific">Saccharomyces cerevisiae (strain ATCC 204508 / S288c)</name>
    <name type="common">Baker's yeast</name>
    <dbReference type="NCBI Taxonomy" id="559292"/>
    <lineage>
        <taxon>Eukaryota</taxon>
        <taxon>Fungi</taxon>
        <taxon>Dikarya</taxon>
        <taxon>Ascomycota</taxon>
        <taxon>Saccharomycotina</taxon>
        <taxon>Saccharomycetes</taxon>
        <taxon>Saccharomycetales</taxon>
        <taxon>Saccharomycetaceae</taxon>
        <taxon>Saccharomyces</taxon>
    </lineage>
</organism>
<gene>
    <name type="ordered locus">YIL165C</name>
    <name type="ORF">YI9402.10AC</name>
</gene>
<feature type="chain" id="PRO_0000204050" description="Putative nitrilase-like protein YIL165C">
    <location>
        <begin position="1"/>
        <end position="119"/>
    </location>
</feature>
<feature type="domain" description="CN hydrolase" evidence="2">
    <location>
        <begin position="1"/>
        <end position="82"/>
    </location>
</feature>
<feature type="active site" description="Proton acceptor" evidence="1">
    <location>
        <position position="21"/>
    </location>
</feature>
<comment type="similarity">
    <text evidence="3">Belongs to the carbon-nitrogen hydrolase superfamily. Nitrilase family.</text>
</comment>
<comment type="caution">
    <text evidence="3">Could be the product of a pseudogene. YIL165C seems to be the C-terminal part of a putative nitrilase-like protein formed of NIT1/YIL164C and YIL165C.</text>
</comment>
<comment type="sequence caution" evidence="3">
    <conflict type="frameshift">
        <sequence resource="EMBL-CDS" id="CAA46924"/>
    </conflict>
</comment>
<evidence type="ECO:0000250" key="1"/>
<evidence type="ECO:0000255" key="2">
    <source>
        <dbReference type="PROSITE-ProRule" id="PRU00054"/>
    </source>
</evidence>
<evidence type="ECO:0000305" key="3"/>
<sequence length="119" mass="12940">MKNIAYEGRLFLISAVQFMPDATAMGFGEIIDQATGKRKLPGWPSADDNCINGGSVIIDPYGEIIAGPLLGQEGLLTAEINTDLIAEARFDLDPVGHYARGDVFQLTVNERSHDVKFTK</sequence>
<name>YIQ5_YEAST</name>
<accession>P40446</accession>
<accession>D6VVC2</accession>
<accession>Q05730</accession>
<keyword id="KW-1185">Reference proteome</keyword>
<dbReference type="EMBL" id="X66132">
    <property type="protein sequence ID" value="CAA46924.1"/>
    <property type="status" value="ALT_FRAME"/>
    <property type="molecule type" value="mRNA"/>
</dbReference>
<dbReference type="EMBL" id="Z46921">
    <property type="protein sequence ID" value="CAA87027.1"/>
    <property type="molecule type" value="Genomic_DNA"/>
</dbReference>
<dbReference type="EMBL" id="AY558540">
    <property type="protein sequence ID" value="AAS56866.1"/>
    <property type="molecule type" value="Genomic_DNA"/>
</dbReference>
<dbReference type="EMBL" id="BK006942">
    <property type="protein sequence ID" value="DAA08388.1"/>
    <property type="molecule type" value="Genomic_DNA"/>
</dbReference>
<dbReference type="PIR" id="S50362">
    <property type="entry name" value="S50362"/>
</dbReference>
<dbReference type="RefSeq" id="NP_012101.1">
    <property type="nucleotide sequence ID" value="NM_001179513.1"/>
</dbReference>
<dbReference type="SMR" id="P40446"/>
<dbReference type="BioGRID" id="34828">
    <property type="interactions" value="49"/>
</dbReference>
<dbReference type="FunCoup" id="P40446">
    <property type="interactions" value="36"/>
</dbReference>
<dbReference type="STRING" id="4932.YIL165C"/>
<dbReference type="PaxDb" id="4932-YIL165C"/>
<dbReference type="EnsemblFungi" id="YIL165C_mRNA">
    <property type="protein sequence ID" value="YIL165C"/>
    <property type="gene ID" value="YIL165C"/>
</dbReference>
<dbReference type="GeneID" id="854641"/>
<dbReference type="KEGG" id="sce:YIL165C"/>
<dbReference type="AGR" id="SGD:S000001427"/>
<dbReference type="SGD" id="S000001427">
    <property type="gene designation" value="YIL165C"/>
</dbReference>
<dbReference type="VEuPathDB" id="FungiDB:YIL165C"/>
<dbReference type="eggNOG" id="KOG0805">
    <property type="taxonomic scope" value="Eukaryota"/>
</dbReference>
<dbReference type="GeneTree" id="ENSGT00530000066464"/>
<dbReference type="HOGENOM" id="CLU_116877_0_0_1"/>
<dbReference type="InParanoid" id="P40446"/>
<dbReference type="OMA" id="ACAKMDM"/>
<dbReference type="OrthoDB" id="10250282at2759"/>
<dbReference type="BioCyc" id="YEAST:G3O-31410-MONOMER"/>
<dbReference type="BioGRID-ORCS" id="854641">
    <property type="hits" value="1 hit in 10 CRISPR screens"/>
</dbReference>
<dbReference type="ChiTaRS" id="YIL165C">
    <property type="organism name" value="yeast"/>
</dbReference>
<dbReference type="Proteomes" id="UP000002311">
    <property type="component" value="Chromosome IX"/>
</dbReference>
<dbReference type="RNAct" id="P40446">
    <property type="molecule type" value="protein"/>
</dbReference>
<dbReference type="GO" id="GO:0003824">
    <property type="term" value="F:catalytic activity"/>
    <property type="evidence" value="ECO:0007669"/>
    <property type="project" value="InterPro"/>
</dbReference>
<dbReference type="GO" id="GO:0000422">
    <property type="term" value="P:autophagy of mitochondrion"/>
    <property type="evidence" value="ECO:0000315"/>
    <property type="project" value="SGD"/>
</dbReference>
<dbReference type="GO" id="GO:0016236">
    <property type="term" value="P:macroautophagy"/>
    <property type="evidence" value="ECO:0000315"/>
    <property type="project" value="SGD"/>
</dbReference>
<dbReference type="FunFam" id="3.60.110.10:FF:000046">
    <property type="entry name" value="YIL165C"/>
    <property type="match status" value="1"/>
</dbReference>
<dbReference type="Gene3D" id="3.60.110.10">
    <property type="entry name" value="Carbon-nitrogen hydrolase"/>
    <property type="match status" value="1"/>
</dbReference>
<dbReference type="InterPro" id="IPR003010">
    <property type="entry name" value="C-N_Hydrolase"/>
</dbReference>
<dbReference type="InterPro" id="IPR036526">
    <property type="entry name" value="C-N_Hydrolase_sf"/>
</dbReference>
<dbReference type="InterPro" id="IPR044149">
    <property type="entry name" value="Nitrilases_CHs"/>
</dbReference>
<dbReference type="PANTHER" id="PTHR46044:SF1">
    <property type="entry name" value="CN HYDROLASE DOMAIN-CONTAINING PROTEIN"/>
    <property type="match status" value="1"/>
</dbReference>
<dbReference type="PANTHER" id="PTHR46044">
    <property type="entry name" value="NITRILASE"/>
    <property type="match status" value="1"/>
</dbReference>
<dbReference type="Pfam" id="PF00795">
    <property type="entry name" value="CN_hydrolase"/>
    <property type="match status" value="1"/>
</dbReference>
<dbReference type="SUPFAM" id="SSF56317">
    <property type="entry name" value="Carbon-nitrogen hydrolase"/>
    <property type="match status" value="1"/>
</dbReference>
<dbReference type="PROSITE" id="PS50263">
    <property type="entry name" value="CN_HYDROLASE"/>
    <property type="match status" value="1"/>
</dbReference>
<reference key="1">
    <citation type="submission" date="1992-06" db="EMBL/GenBank/DDBJ databases">
        <title>Study of a DNA fragment involved in the ergosterol biosynthesis.</title>
        <authorList>
            <person name="Doignon F."/>
            <person name="Pilatte E."/>
            <person name="Aigle M."/>
        </authorList>
    </citation>
    <scope>NUCLEOTIDE SEQUENCE [MRNA]</scope>
</reference>
<reference key="2">
    <citation type="journal article" date="1997" name="Nature">
        <title>The nucleotide sequence of Saccharomyces cerevisiae chromosome IX.</title>
        <authorList>
            <person name="Churcher C.M."/>
            <person name="Bowman S."/>
            <person name="Badcock K."/>
            <person name="Bankier A.T."/>
            <person name="Brown D."/>
            <person name="Chillingworth T."/>
            <person name="Connor R."/>
            <person name="Devlin K."/>
            <person name="Gentles S."/>
            <person name="Hamlin N."/>
            <person name="Harris D.E."/>
            <person name="Horsnell T."/>
            <person name="Hunt S."/>
            <person name="Jagels K."/>
            <person name="Jones M."/>
            <person name="Lye G."/>
            <person name="Moule S."/>
            <person name="Odell C."/>
            <person name="Pearson D."/>
            <person name="Rajandream M.A."/>
            <person name="Rice P."/>
            <person name="Rowley N."/>
            <person name="Skelton J."/>
            <person name="Smith V."/>
            <person name="Walsh S.V."/>
            <person name="Whitehead S."/>
            <person name="Barrell B.G."/>
        </authorList>
    </citation>
    <scope>NUCLEOTIDE SEQUENCE [LARGE SCALE GENOMIC DNA]</scope>
    <source>
        <strain>ATCC 204508 / S288c</strain>
    </source>
</reference>
<reference key="3">
    <citation type="journal article" date="2014" name="G3 (Bethesda)">
        <title>The reference genome sequence of Saccharomyces cerevisiae: Then and now.</title>
        <authorList>
            <person name="Engel S.R."/>
            <person name="Dietrich F.S."/>
            <person name="Fisk D.G."/>
            <person name="Binkley G."/>
            <person name="Balakrishnan R."/>
            <person name="Costanzo M.C."/>
            <person name="Dwight S.S."/>
            <person name="Hitz B.C."/>
            <person name="Karra K."/>
            <person name="Nash R.S."/>
            <person name="Weng S."/>
            <person name="Wong E.D."/>
            <person name="Lloyd P."/>
            <person name="Skrzypek M.S."/>
            <person name="Miyasato S.R."/>
            <person name="Simison M."/>
            <person name="Cherry J.M."/>
        </authorList>
    </citation>
    <scope>GENOME REANNOTATION</scope>
    <source>
        <strain>ATCC 204508 / S288c</strain>
    </source>
</reference>
<reference key="4">
    <citation type="journal article" date="2007" name="Genome Res.">
        <title>Approaching a complete repository of sequence-verified protein-encoding clones for Saccharomyces cerevisiae.</title>
        <authorList>
            <person name="Hu Y."/>
            <person name="Rolfs A."/>
            <person name="Bhullar B."/>
            <person name="Murthy T.V.S."/>
            <person name="Zhu C."/>
            <person name="Berger M.F."/>
            <person name="Camargo A.A."/>
            <person name="Kelley F."/>
            <person name="McCarron S."/>
            <person name="Jepson D."/>
            <person name="Richardson A."/>
            <person name="Raphael J."/>
            <person name="Moreira D."/>
            <person name="Taycher E."/>
            <person name="Zuo D."/>
            <person name="Mohr S."/>
            <person name="Kane M.F."/>
            <person name="Williamson J."/>
            <person name="Simpson A.J.G."/>
            <person name="Bulyk M.L."/>
            <person name="Harlow E."/>
            <person name="Marsischky G."/>
            <person name="Kolodner R.D."/>
            <person name="LaBaer J."/>
        </authorList>
    </citation>
    <scope>NUCLEOTIDE SEQUENCE [GENOMIC DNA]</scope>
    <source>
        <strain>ATCC 204508 / S288c</strain>
    </source>
</reference>
<protein>
    <recommendedName>
        <fullName>Putative nitrilase-like protein YIL165C</fullName>
    </recommendedName>
</protein>